<keyword id="KW-0903">Direct protein sequencing</keyword>
<keyword id="KW-1015">Disulfide bond</keyword>
<keyword id="KW-0872">Ion channel impairing toxin</keyword>
<keyword id="KW-0528">Neurotoxin</keyword>
<keyword id="KW-0964">Secreted</keyword>
<keyword id="KW-0732">Signal</keyword>
<keyword id="KW-0800">Toxin</keyword>
<keyword id="KW-0738">Voltage-gated sodium channel impairing toxin</keyword>
<organism>
    <name type="scientific">Olivierus martensii</name>
    <name type="common">Manchurian scorpion</name>
    <name type="synonym">Mesobuthus martensii</name>
    <dbReference type="NCBI Taxonomy" id="34649"/>
    <lineage>
        <taxon>Eukaryota</taxon>
        <taxon>Metazoa</taxon>
        <taxon>Ecdysozoa</taxon>
        <taxon>Arthropoda</taxon>
        <taxon>Chelicerata</taxon>
        <taxon>Arachnida</taxon>
        <taxon>Scorpiones</taxon>
        <taxon>Buthida</taxon>
        <taxon>Buthoidea</taxon>
        <taxon>Buthidae</taxon>
        <taxon>Olivierus</taxon>
    </lineage>
</organism>
<accession>Q9UAC9</accession>
<dbReference type="EMBL" id="AF079060">
    <property type="protein sequence ID" value="AAD47374.1"/>
    <property type="molecule type" value="Genomic_DNA"/>
</dbReference>
<dbReference type="SMR" id="Q9UAC9"/>
<dbReference type="GO" id="GO:0005576">
    <property type="term" value="C:extracellular region"/>
    <property type="evidence" value="ECO:0007669"/>
    <property type="project" value="UniProtKB-SubCell"/>
</dbReference>
<dbReference type="GO" id="GO:0019871">
    <property type="term" value="F:sodium channel inhibitor activity"/>
    <property type="evidence" value="ECO:0007669"/>
    <property type="project" value="InterPro"/>
</dbReference>
<dbReference type="GO" id="GO:0090729">
    <property type="term" value="F:toxin activity"/>
    <property type="evidence" value="ECO:0007669"/>
    <property type="project" value="UniProtKB-KW"/>
</dbReference>
<dbReference type="GO" id="GO:0006952">
    <property type="term" value="P:defense response"/>
    <property type="evidence" value="ECO:0007669"/>
    <property type="project" value="InterPro"/>
</dbReference>
<dbReference type="CDD" id="cd23106">
    <property type="entry name" value="neurotoxins_LC_scorpion"/>
    <property type="match status" value="1"/>
</dbReference>
<dbReference type="Gene3D" id="3.30.30.10">
    <property type="entry name" value="Knottin, scorpion toxin-like"/>
    <property type="match status" value="1"/>
</dbReference>
<dbReference type="InterPro" id="IPR044062">
    <property type="entry name" value="LCN-type_CS_alpha_beta_dom"/>
</dbReference>
<dbReference type="InterPro" id="IPR003614">
    <property type="entry name" value="Scorpion_toxin-like"/>
</dbReference>
<dbReference type="InterPro" id="IPR036574">
    <property type="entry name" value="Scorpion_toxin-like_sf"/>
</dbReference>
<dbReference type="InterPro" id="IPR018218">
    <property type="entry name" value="Scorpion_toxinL"/>
</dbReference>
<dbReference type="InterPro" id="IPR002061">
    <property type="entry name" value="Scorpion_toxinL/defensin"/>
</dbReference>
<dbReference type="Pfam" id="PF00537">
    <property type="entry name" value="Toxin_3"/>
    <property type="match status" value="1"/>
</dbReference>
<dbReference type="PRINTS" id="PR00285">
    <property type="entry name" value="SCORPNTOXIN"/>
</dbReference>
<dbReference type="SMART" id="SM00505">
    <property type="entry name" value="Knot1"/>
    <property type="match status" value="1"/>
</dbReference>
<dbReference type="SUPFAM" id="SSF57095">
    <property type="entry name" value="Scorpion toxin-like"/>
    <property type="match status" value="1"/>
</dbReference>
<dbReference type="PROSITE" id="PS51863">
    <property type="entry name" value="LCN_CSAB"/>
    <property type="match status" value="1"/>
</dbReference>
<sequence>MKTVIFLIVSSLLLIGVKTDNGYLLDKYTGCKVWCVINNESCNSECKIRGGYYGYCYFWKLACFCQGARKSELWNYNTNKCNGKL</sequence>
<proteinExistence type="evidence at protein level"/>
<comment type="function">
    <text evidence="3 4 5 6 7 8 9">Beta toxins bind voltage-independently at site-4 of sodium channels (Nav) and shift the voltage of activation toward more negative potentials thereby affecting sodium channel activation and promoting spontaneous and repetitive firing. It binds to distinct receptor sites of mammal and insect voltage-gated sodium channels. It displays antinociceptive effect in rat models, which is due to its specific modulation of sodium channels of sensory neurons. It also significantly stimulates the binding of [3H]-ryanodine to ryanodine receptors on the sarcoplasmic reticulum of the skeletal muscle through an indirect mechanism. And it promotes noradrenaline release from the rat hippocampus slice.</text>
</comment>
<comment type="subcellular location">
    <subcellularLocation>
        <location>Secreted</location>
    </subcellularLocation>
</comment>
<comment type="tissue specificity">
    <text>Expressed by the venom gland.</text>
</comment>
<comment type="domain">
    <text evidence="10">Has the structural arrangement of an alpha-helix connected to antiparallel beta-sheets by disulfide bonds (CS-alpha/beta).</text>
</comment>
<comment type="mass spectrometry"/>
<comment type="similarity">
    <text evidence="10">Belongs to the long (4 C-C) scorpion toxin superfamily. Sodium channel inhibitor family.</text>
</comment>
<protein>
    <recommendedName>
        <fullName>Beta-toxin BmKAS</fullName>
        <shortName>BmK AS</shortName>
        <shortName>BmK-AS</shortName>
    </recommendedName>
    <alternativeName>
        <fullName>BmK-PL</fullName>
    </alternativeName>
</protein>
<name>SCAS_OLIMR</name>
<evidence type="ECO:0000255" key="1">
    <source>
        <dbReference type="PROSITE-ProRule" id="PRU01210"/>
    </source>
</evidence>
<evidence type="ECO:0000269" key="2">
    <source>
    </source>
</evidence>
<evidence type="ECO:0000269" key="3">
    <source>
    </source>
</evidence>
<evidence type="ECO:0000269" key="4">
    <source>
    </source>
</evidence>
<evidence type="ECO:0000269" key="5">
    <source>
    </source>
</evidence>
<evidence type="ECO:0000269" key="6">
    <source>
    </source>
</evidence>
<evidence type="ECO:0000269" key="7">
    <source>
    </source>
</evidence>
<evidence type="ECO:0000269" key="8">
    <source>
    </source>
</evidence>
<evidence type="ECO:0000269" key="9">
    <source ref="3"/>
</evidence>
<evidence type="ECO:0000305" key="10"/>
<feature type="signal peptide" evidence="2">
    <location>
        <begin position="1"/>
        <end position="19"/>
    </location>
</feature>
<feature type="chain" id="PRO_0000035262" description="Beta-toxin BmKAS">
    <location>
        <begin position="20"/>
        <end position="85"/>
    </location>
</feature>
<feature type="domain" description="LCN-type CS-alpha/beta" evidence="1">
    <location>
        <begin position="20"/>
        <end position="82"/>
    </location>
</feature>
<feature type="disulfide bond" evidence="1">
    <location>
        <begin position="31"/>
        <end position="81"/>
    </location>
</feature>
<feature type="disulfide bond" evidence="1">
    <location>
        <begin position="35"/>
        <end position="56"/>
    </location>
</feature>
<feature type="disulfide bond" evidence="1">
    <location>
        <begin position="42"/>
        <end position="63"/>
    </location>
</feature>
<feature type="disulfide bond" evidence="1">
    <location>
        <begin position="46"/>
        <end position="65"/>
    </location>
</feature>
<feature type="sequence conflict" description="In Ref. 2; AA sequence." evidence="10" ref="2">
    <original>N</original>
    <variation>D</variation>
    <location>
        <position position="82"/>
    </location>
</feature>
<reference key="1">
    <citation type="journal article" date="1999" name="Toxicon">
        <title>Gene cloning and sequencing of BmK AS and BmK AS-1, two novel neurotoxins from the scorpion Buthus martensi Karsch.</title>
        <authorList>
            <person name="Lan Z.-D."/>
            <person name="Dai L."/>
            <person name="Zhuo X.-L."/>
            <person name="Feng J.-C."/>
            <person name="Xu K."/>
            <person name="Chi C.-W."/>
        </authorList>
    </citation>
    <scope>NUCLEOTIDE SEQUENCE [GENOMIC DNA]</scope>
    <source>
        <tissue>Venom gland</tissue>
    </source>
</reference>
<reference key="2">
    <citation type="journal article" date="1999" name="Toxicon">
        <title>Covalent structures of BmK AS and BmK AS-1, two novel bioactive polypeptides purified from Chinese scorpion Buthus martensi Karsch.</title>
        <authorList>
            <person name="Ji Y.-H."/>
            <person name="Li Y.-J."/>
            <person name="Zhang J.-W."/>
            <person name="Song B.-L."/>
            <person name="Yamaki T."/>
            <person name="Mochizuki T."/>
            <person name="Hoshino M."/>
            <person name="Yanaihara N."/>
        </authorList>
    </citation>
    <scope>PROTEIN SEQUENCE OF 20-85</scope>
    <scope>MASS SPECTROMETRY</scope>
    <source>
        <tissue>Venom</tissue>
    </source>
</reference>
<reference key="3">
    <citation type="journal article" date="1997" name="Biomed. Res.">
        <title>BmK AS, an active scorpion polypeptide, enhance [3H]-noradrenaline release from rat hippocampal slices.</title>
        <authorList>
            <person name="Ji Y.-H."/>
            <person name="Huang H.-Y."/>
            <person name="Zhou C.-W."/>
            <person name="Liu Y."/>
            <person name="Hoshino M."/>
            <person name="Mochizuki T."/>
            <person name="Yanaihara N."/>
        </authorList>
    </citation>
    <scope>FUNCTION</scope>
</reference>
<reference key="4">
    <citation type="journal article" date="1999" name="Biochem. J.">
        <title>A new scorpion toxin (BmK-PL) stimulates Ca2+-release channel activity of the skeletal-muscle ryanodine receptor by an indirect mechanism.</title>
        <authorList>
            <person name="Kuniyasu A."/>
            <person name="Kawano S."/>
            <person name="Hirayama Y."/>
            <person name="Ji Y.-H."/>
            <person name="Xu K."/>
            <person name="Ohkura M."/>
            <person name="Furukawa K."/>
            <person name="Ohizumi Y."/>
            <person name="Hiraoka M."/>
            <person name="Nakayama H."/>
        </authorList>
    </citation>
    <scope>FUNCTION</scope>
</reference>
<reference key="5">
    <citation type="journal article" date="2000" name="J. Neurosci. Res.">
        <title>BmK AS: new scorpion neurotoxin binds to distinct receptor sites of mammal and insect voltage-gated sodium channels.</title>
        <authorList>
            <person name="Li Y.-J."/>
            <person name="Liu Y."/>
            <person name="Ji Y.-H."/>
        </authorList>
    </citation>
    <scope>FUNCTION</scope>
</reference>
<reference key="6">
    <citation type="journal article" date="2002" name="Brain Res.">
        <title>Antihyperalgesia effect of BmK AS, a scorpion toxin, in rat by intraplantar injection.</title>
        <authorList>
            <person name="Chen B."/>
            <person name="Ji Y.-H."/>
        </authorList>
    </citation>
    <scope>FUNCTION</scope>
</reference>
<reference key="7">
    <citation type="journal article" date="2003" name="Neurosci. Lett.">
        <title>Modulation of BmK AS, a scorpion neurotoxic polypeptide, on voltage-gated Na+ channels in B104 neuronal cell line.</title>
        <authorList>
            <person name="Tan Z.-Y."/>
            <person name="Chen J."/>
            <person name="Shun H.-Y."/>
            <person name="Feng X.-H."/>
            <person name="Ji Y.-H."/>
        </authorList>
    </citation>
    <scope>FUNCTION</scope>
</reference>
<reference key="8">
    <citation type="journal article" date="2004" name="NeuroReport">
        <title>Modulation of intracellular Na+ concentration by BmK AS, a scorpion toxin, in B104 cell line.</title>
        <authorList>
            <person name="Tan Z.-Y."/>
            <person name="Chen J."/>
            <person name="Feng X.-H."/>
            <person name="Susumu T."/>
            <person name="Ji Y.-H."/>
        </authorList>
    </citation>
    <scope>FUNCTION</scope>
</reference>
<reference key="9">
    <citation type="journal article" date="2006" name="Peptides">
        <title>The anti-nociceptive effect of BmK AS, a scorpion active polypeptide, and the possible mechanism on specifically modulating voltage-gated Na+ currents in primary afferent neurons.</title>
        <authorList>
            <person name="Chen J."/>
            <person name="Feng X.-H."/>
            <person name="Shi J."/>
            <person name="Tan Z.-Y."/>
            <person name="Bai Z.-T."/>
            <person name="Liu T."/>
            <person name="Ji Y.-H."/>
        </authorList>
    </citation>
    <scope>FUNCTION</scope>
</reference>